<evidence type="ECO:0000250" key="1"/>
<evidence type="ECO:0000255" key="2">
    <source>
        <dbReference type="HAMAP-Rule" id="MF_00736"/>
    </source>
</evidence>
<evidence type="ECO:0000305" key="3"/>
<proteinExistence type="inferred from homology"/>
<reference key="1">
    <citation type="journal article" date="2005" name="Nucleic Acids Res.">
        <title>Genome dynamics and diversity of Shigella species, the etiologic agents of bacillary dysentery.</title>
        <authorList>
            <person name="Yang F."/>
            <person name="Yang J."/>
            <person name="Zhang X."/>
            <person name="Chen L."/>
            <person name="Jiang Y."/>
            <person name="Yan Y."/>
            <person name="Tang X."/>
            <person name="Wang J."/>
            <person name="Xiong Z."/>
            <person name="Dong J."/>
            <person name="Xue Y."/>
            <person name="Zhu Y."/>
            <person name="Xu X."/>
            <person name="Sun L."/>
            <person name="Chen S."/>
            <person name="Nie H."/>
            <person name="Peng J."/>
            <person name="Xu J."/>
            <person name="Wang Y."/>
            <person name="Yuan Z."/>
            <person name="Wen Y."/>
            <person name="Yao Z."/>
            <person name="Shen Y."/>
            <person name="Qiang B."/>
            <person name="Hou Y."/>
            <person name="Yu J."/>
            <person name="Jin Q."/>
        </authorList>
    </citation>
    <scope>NUCLEOTIDE SEQUENCE [LARGE SCALE GENOMIC DNA]</scope>
    <source>
        <strain>Ss046</strain>
    </source>
</reference>
<feature type="initiator methionine" description="Removed" evidence="1">
    <location>
        <position position="1"/>
    </location>
</feature>
<feature type="chain" id="PRO_0000258213" description="Large ribosomal subunit protein uL11">
    <location>
        <begin position="2"/>
        <end position="142"/>
    </location>
</feature>
<sequence length="142" mass="14875">MAKKVQAYVKLQVAAGMANPSPPVGPALGQQGVNIMEFCKAFNAKTDSIEKGLPIPVVITVYADRSFTFVTKTPPAAVLLKKAAGIKSGSGKPNKDKVGKISRAQLQEIAQTKAADMTGADIEAMTRSIEGTARSMGLVVED</sequence>
<organism>
    <name type="scientific">Shigella sonnei (strain Ss046)</name>
    <dbReference type="NCBI Taxonomy" id="300269"/>
    <lineage>
        <taxon>Bacteria</taxon>
        <taxon>Pseudomonadati</taxon>
        <taxon>Pseudomonadota</taxon>
        <taxon>Gammaproteobacteria</taxon>
        <taxon>Enterobacterales</taxon>
        <taxon>Enterobacteriaceae</taxon>
        <taxon>Shigella</taxon>
    </lineage>
</organism>
<comment type="function">
    <text evidence="2">Forms part of the ribosomal stalk which helps the ribosome interact with GTP-bound translation factors.</text>
</comment>
<comment type="subunit">
    <text evidence="2">Part of the ribosomal stalk of the 50S ribosomal subunit. Interacts with L10 and the large rRNA to form the base of the stalk. L10 forms an elongated spine to which L12 dimers bind in a sequential fashion forming a multimeric L10(L12)X complex.</text>
</comment>
<comment type="PTM">
    <text evidence="2">One or more lysine residues are methylated.</text>
</comment>
<comment type="similarity">
    <text evidence="2">Belongs to the universal ribosomal protein uL11 family.</text>
</comment>
<protein>
    <recommendedName>
        <fullName evidence="2">Large ribosomal subunit protein uL11</fullName>
    </recommendedName>
    <alternativeName>
        <fullName evidence="3">50S ribosomal protein L11</fullName>
    </alternativeName>
</protein>
<gene>
    <name evidence="2" type="primary">rplK</name>
    <name type="ordered locus">SSON_4156</name>
</gene>
<accession>Q3YV01</accession>
<name>RL11_SHISS</name>
<dbReference type="EMBL" id="CP000038">
    <property type="protein sequence ID" value="AAZ90661.1"/>
    <property type="molecule type" value="Genomic_DNA"/>
</dbReference>
<dbReference type="RefSeq" id="WP_001085926.1">
    <property type="nucleotide sequence ID" value="NC_007384.1"/>
</dbReference>
<dbReference type="SMR" id="Q3YV01"/>
<dbReference type="GeneID" id="93777911"/>
<dbReference type="KEGG" id="ssn:SSON_4156"/>
<dbReference type="HOGENOM" id="CLU_074237_2_0_6"/>
<dbReference type="Proteomes" id="UP000002529">
    <property type="component" value="Chromosome"/>
</dbReference>
<dbReference type="GO" id="GO:0022625">
    <property type="term" value="C:cytosolic large ribosomal subunit"/>
    <property type="evidence" value="ECO:0007669"/>
    <property type="project" value="TreeGrafter"/>
</dbReference>
<dbReference type="GO" id="GO:0070180">
    <property type="term" value="F:large ribosomal subunit rRNA binding"/>
    <property type="evidence" value="ECO:0007669"/>
    <property type="project" value="UniProtKB-UniRule"/>
</dbReference>
<dbReference type="GO" id="GO:0003735">
    <property type="term" value="F:structural constituent of ribosome"/>
    <property type="evidence" value="ECO:0007669"/>
    <property type="project" value="InterPro"/>
</dbReference>
<dbReference type="GO" id="GO:0006412">
    <property type="term" value="P:translation"/>
    <property type="evidence" value="ECO:0007669"/>
    <property type="project" value="UniProtKB-UniRule"/>
</dbReference>
<dbReference type="CDD" id="cd00349">
    <property type="entry name" value="Ribosomal_L11"/>
    <property type="match status" value="1"/>
</dbReference>
<dbReference type="FunFam" id="1.10.10.250:FF:000001">
    <property type="entry name" value="50S ribosomal protein L11"/>
    <property type="match status" value="1"/>
</dbReference>
<dbReference type="FunFam" id="3.30.1550.10:FF:000001">
    <property type="entry name" value="50S ribosomal protein L11"/>
    <property type="match status" value="1"/>
</dbReference>
<dbReference type="Gene3D" id="1.10.10.250">
    <property type="entry name" value="Ribosomal protein L11, C-terminal domain"/>
    <property type="match status" value="1"/>
</dbReference>
<dbReference type="Gene3D" id="3.30.1550.10">
    <property type="entry name" value="Ribosomal protein L11/L12, N-terminal domain"/>
    <property type="match status" value="1"/>
</dbReference>
<dbReference type="HAMAP" id="MF_00736">
    <property type="entry name" value="Ribosomal_uL11"/>
    <property type="match status" value="1"/>
</dbReference>
<dbReference type="InterPro" id="IPR000911">
    <property type="entry name" value="Ribosomal_uL11"/>
</dbReference>
<dbReference type="InterPro" id="IPR006519">
    <property type="entry name" value="Ribosomal_uL11_bac-typ"/>
</dbReference>
<dbReference type="InterPro" id="IPR020783">
    <property type="entry name" value="Ribosomal_uL11_C"/>
</dbReference>
<dbReference type="InterPro" id="IPR036769">
    <property type="entry name" value="Ribosomal_uL11_C_sf"/>
</dbReference>
<dbReference type="InterPro" id="IPR020785">
    <property type="entry name" value="Ribosomal_uL11_CS"/>
</dbReference>
<dbReference type="InterPro" id="IPR020784">
    <property type="entry name" value="Ribosomal_uL11_N"/>
</dbReference>
<dbReference type="InterPro" id="IPR036796">
    <property type="entry name" value="Ribosomal_uL11_N_sf"/>
</dbReference>
<dbReference type="NCBIfam" id="TIGR01632">
    <property type="entry name" value="L11_bact"/>
    <property type="match status" value="1"/>
</dbReference>
<dbReference type="PANTHER" id="PTHR11661">
    <property type="entry name" value="60S RIBOSOMAL PROTEIN L12"/>
    <property type="match status" value="1"/>
</dbReference>
<dbReference type="PANTHER" id="PTHR11661:SF1">
    <property type="entry name" value="LARGE RIBOSOMAL SUBUNIT PROTEIN UL11M"/>
    <property type="match status" value="1"/>
</dbReference>
<dbReference type="Pfam" id="PF00298">
    <property type="entry name" value="Ribosomal_L11"/>
    <property type="match status" value="1"/>
</dbReference>
<dbReference type="Pfam" id="PF03946">
    <property type="entry name" value="Ribosomal_L11_N"/>
    <property type="match status" value="1"/>
</dbReference>
<dbReference type="SMART" id="SM00649">
    <property type="entry name" value="RL11"/>
    <property type="match status" value="1"/>
</dbReference>
<dbReference type="SUPFAM" id="SSF54747">
    <property type="entry name" value="Ribosomal L11/L12e N-terminal domain"/>
    <property type="match status" value="1"/>
</dbReference>
<dbReference type="SUPFAM" id="SSF46906">
    <property type="entry name" value="Ribosomal protein L11, C-terminal domain"/>
    <property type="match status" value="1"/>
</dbReference>
<dbReference type="PROSITE" id="PS00359">
    <property type="entry name" value="RIBOSOMAL_L11"/>
    <property type="match status" value="1"/>
</dbReference>
<keyword id="KW-0488">Methylation</keyword>
<keyword id="KW-1185">Reference proteome</keyword>
<keyword id="KW-0687">Ribonucleoprotein</keyword>
<keyword id="KW-0689">Ribosomal protein</keyword>
<keyword id="KW-0694">RNA-binding</keyword>
<keyword id="KW-0699">rRNA-binding</keyword>